<reference key="1">
    <citation type="journal article" date="2005" name="Science">
        <title>Life at depth: Photobacterium profundum genome sequence and expression analysis.</title>
        <authorList>
            <person name="Vezzi A."/>
            <person name="Campanaro S."/>
            <person name="D'Angelo M."/>
            <person name="Simonato F."/>
            <person name="Vitulo N."/>
            <person name="Lauro F.M."/>
            <person name="Cestaro A."/>
            <person name="Malacrida G."/>
            <person name="Simionati B."/>
            <person name="Cannata N."/>
            <person name="Romualdi C."/>
            <person name="Bartlett D.H."/>
            <person name="Valle G."/>
        </authorList>
    </citation>
    <scope>NUCLEOTIDE SEQUENCE [LARGE SCALE GENOMIC DNA]</scope>
    <source>
        <strain>ATCC BAA-1253 / SS9</strain>
    </source>
</reference>
<proteinExistence type="inferred from homology"/>
<name>SYP_PHOPR</name>
<evidence type="ECO:0000255" key="1">
    <source>
        <dbReference type="HAMAP-Rule" id="MF_01569"/>
    </source>
</evidence>
<keyword id="KW-0030">Aminoacyl-tRNA synthetase</keyword>
<keyword id="KW-0067">ATP-binding</keyword>
<keyword id="KW-0963">Cytoplasm</keyword>
<keyword id="KW-0436">Ligase</keyword>
<keyword id="KW-0547">Nucleotide-binding</keyword>
<keyword id="KW-0648">Protein biosynthesis</keyword>
<keyword id="KW-1185">Reference proteome</keyword>
<feature type="chain" id="PRO_0000248735" description="Proline--tRNA ligase">
    <location>
        <begin position="1"/>
        <end position="571"/>
    </location>
</feature>
<protein>
    <recommendedName>
        <fullName evidence="1">Proline--tRNA ligase</fullName>
        <ecNumber evidence="1">6.1.1.15</ecNumber>
    </recommendedName>
    <alternativeName>
        <fullName evidence="1">Prolyl-tRNA synthetase</fullName>
        <shortName evidence="1">ProRS</shortName>
    </alternativeName>
</protein>
<accession>Q6LN48</accession>
<gene>
    <name evidence="1" type="primary">proS</name>
    <name type="ordered locus">PBPRA2944</name>
</gene>
<organism>
    <name type="scientific">Photobacterium profundum (strain SS9)</name>
    <dbReference type="NCBI Taxonomy" id="298386"/>
    <lineage>
        <taxon>Bacteria</taxon>
        <taxon>Pseudomonadati</taxon>
        <taxon>Pseudomonadota</taxon>
        <taxon>Gammaproteobacteria</taxon>
        <taxon>Vibrionales</taxon>
        <taxon>Vibrionaceae</taxon>
        <taxon>Photobacterium</taxon>
    </lineage>
</organism>
<sequence length="571" mass="62819">MRTSNYLLSTLKETPNDAEVISHQLMLRAGMIRKLASGLYTWLPTGLRVLRKVENIVRQEIDNAGAVEILMPVVQPFELWEETGRSEKMGPELLRFTDRHSRPFVLSPTAEEVVTSLVRNEISSYKQLPLNLYQIQTKFRDERRPRFGVMRAREFSMMDAYSFDIDKEGLEKSYQAMHDAYCKAFDRMGLEYRPVLADSGAIGGSGSQEFHVLAESGEDLIAFSSDSDYAANIEKAEALAPTAELAAATQEMELVDTPNAKTIAELVEQHGLAIEKTVKTLFVKASDEIDADIVALIIRGDHELNEVKAENLPQVASPLEMAEEAEIRALIGAGPGSLGPVGLELPFIVDRTVAIMSDFGAGANVDGKHYFGINWGRDVELAQVEDLRNVVEGDLSPCGQGTIQLKRGIEVGHIFQLGTNYSKKMNCNVLGPDGKSATLEMGCYGIGVSRIVASAIEQNNDENGIIWPTALAPFQVAIVPMNMAKSEEVKAAAESLYAELTAAGIEVLFDDRKERPGVMFKDIELIGIPHTIVIGNRSLENGEMEYKDRRDGNKVAVPVADVVEMIKQKLA</sequence>
<comment type="function">
    <text evidence="1">Catalyzes the attachment of proline to tRNA(Pro) in a two-step reaction: proline is first activated by ATP to form Pro-AMP and then transferred to the acceptor end of tRNA(Pro). As ProRS can inadvertently accommodate and process non-cognate amino acids such as alanine and cysteine, to avoid such errors it has two additional distinct editing activities against alanine. One activity is designated as 'pretransfer' editing and involves the tRNA(Pro)-independent hydrolysis of activated Ala-AMP. The other activity is designated 'posttransfer' editing and involves deacylation of mischarged Ala-tRNA(Pro). The misacylated Cys-tRNA(Pro) is not edited by ProRS.</text>
</comment>
<comment type="catalytic activity">
    <reaction evidence="1">
        <text>tRNA(Pro) + L-proline + ATP = L-prolyl-tRNA(Pro) + AMP + diphosphate</text>
        <dbReference type="Rhea" id="RHEA:14305"/>
        <dbReference type="Rhea" id="RHEA-COMP:9700"/>
        <dbReference type="Rhea" id="RHEA-COMP:9702"/>
        <dbReference type="ChEBI" id="CHEBI:30616"/>
        <dbReference type="ChEBI" id="CHEBI:33019"/>
        <dbReference type="ChEBI" id="CHEBI:60039"/>
        <dbReference type="ChEBI" id="CHEBI:78442"/>
        <dbReference type="ChEBI" id="CHEBI:78532"/>
        <dbReference type="ChEBI" id="CHEBI:456215"/>
        <dbReference type="EC" id="6.1.1.15"/>
    </reaction>
</comment>
<comment type="subunit">
    <text evidence="1">Homodimer.</text>
</comment>
<comment type="subcellular location">
    <subcellularLocation>
        <location evidence="1">Cytoplasm</location>
    </subcellularLocation>
</comment>
<comment type="domain">
    <text evidence="1">Consists of three domains: the N-terminal catalytic domain, the editing domain and the C-terminal anticodon-binding domain.</text>
</comment>
<comment type="similarity">
    <text evidence="1">Belongs to the class-II aminoacyl-tRNA synthetase family. ProS type 1 subfamily.</text>
</comment>
<dbReference type="EC" id="6.1.1.15" evidence="1"/>
<dbReference type="EMBL" id="CR378672">
    <property type="protein sequence ID" value="CAG21278.1"/>
    <property type="molecule type" value="Genomic_DNA"/>
</dbReference>
<dbReference type="RefSeq" id="WP_011219546.1">
    <property type="nucleotide sequence ID" value="NC_006370.1"/>
</dbReference>
<dbReference type="SMR" id="Q6LN48"/>
<dbReference type="STRING" id="298386.PBPRA2944"/>
<dbReference type="KEGG" id="ppr:PBPRA2944"/>
<dbReference type="eggNOG" id="COG0442">
    <property type="taxonomic scope" value="Bacteria"/>
</dbReference>
<dbReference type="HOGENOM" id="CLU_016739_0_0_6"/>
<dbReference type="Proteomes" id="UP000000593">
    <property type="component" value="Chromosome 1"/>
</dbReference>
<dbReference type="GO" id="GO:0005829">
    <property type="term" value="C:cytosol"/>
    <property type="evidence" value="ECO:0007669"/>
    <property type="project" value="TreeGrafter"/>
</dbReference>
<dbReference type="GO" id="GO:0002161">
    <property type="term" value="F:aminoacyl-tRNA deacylase activity"/>
    <property type="evidence" value="ECO:0007669"/>
    <property type="project" value="InterPro"/>
</dbReference>
<dbReference type="GO" id="GO:0005524">
    <property type="term" value="F:ATP binding"/>
    <property type="evidence" value="ECO:0007669"/>
    <property type="project" value="UniProtKB-UniRule"/>
</dbReference>
<dbReference type="GO" id="GO:0004827">
    <property type="term" value="F:proline-tRNA ligase activity"/>
    <property type="evidence" value="ECO:0007669"/>
    <property type="project" value="UniProtKB-UniRule"/>
</dbReference>
<dbReference type="GO" id="GO:0006433">
    <property type="term" value="P:prolyl-tRNA aminoacylation"/>
    <property type="evidence" value="ECO:0007669"/>
    <property type="project" value="UniProtKB-UniRule"/>
</dbReference>
<dbReference type="CDD" id="cd04334">
    <property type="entry name" value="ProRS-INS"/>
    <property type="match status" value="1"/>
</dbReference>
<dbReference type="CDD" id="cd00861">
    <property type="entry name" value="ProRS_anticodon_short"/>
    <property type="match status" value="1"/>
</dbReference>
<dbReference type="CDD" id="cd00779">
    <property type="entry name" value="ProRS_core_prok"/>
    <property type="match status" value="1"/>
</dbReference>
<dbReference type="FunFam" id="3.30.930.10:FF:000015">
    <property type="entry name" value="Proline--tRNA ligase"/>
    <property type="match status" value="1"/>
</dbReference>
<dbReference type="FunFam" id="3.30.930.10:FF:000043">
    <property type="entry name" value="Proline--tRNA ligase"/>
    <property type="match status" value="1"/>
</dbReference>
<dbReference type="FunFam" id="3.40.50.800:FF:000006">
    <property type="entry name" value="Proline--tRNA ligase"/>
    <property type="match status" value="1"/>
</dbReference>
<dbReference type="Gene3D" id="3.40.50.800">
    <property type="entry name" value="Anticodon-binding domain"/>
    <property type="match status" value="1"/>
</dbReference>
<dbReference type="Gene3D" id="3.30.930.10">
    <property type="entry name" value="Bira Bifunctional Protein, Domain 2"/>
    <property type="match status" value="2"/>
</dbReference>
<dbReference type="HAMAP" id="MF_01569">
    <property type="entry name" value="Pro_tRNA_synth_type1"/>
    <property type="match status" value="1"/>
</dbReference>
<dbReference type="InterPro" id="IPR002314">
    <property type="entry name" value="aa-tRNA-synt_IIb"/>
</dbReference>
<dbReference type="InterPro" id="IPR006195">
    <property type="entry name" value="aa-tRNA-synth_II"/>
</dbReference>
<dbReference type="InterPro" id="IPR045864">
    <property type="entry name" value="aa-tRNA-synth_II/BPL/LPL"/>
</dbReference>
<dbReference type="InterPro" id="IPR004154">
    <property type="entry name" value="Anticodon-bd"/>
</dbReference>
<dbReference type="InterPro" id="IPR036621">
    <property type="entry name" value="Anticodon-bd_dom_sf"/>
</dbReference>
<dbReference type="InterPro" id="IPR002316">
    <property type="entry name" value="Pro-tRNA-ligase_IIa"/>
</dbReference>
<dbReference type="InterPro" id="IPR004500">
    <property type="entry name" value="Pro-tRNA-synth_IIa_bac-type"/>
</dbReference>
<dbReference type="InterPro" id="IPR023717">
    <property type="entry name" value="Pro-tRNA-Synthase_IIa_type1"/>
</dbReference>
<dbReference type="InterPro" id="IPR050062">
    <property type="entry name" value="Pro-tRNA_synthetase"/>
</dbReference>
<dbReference type="InterPro" id="IPR044140">
    <property type="entry name" value="ProRS_anticodon_short"/>
</dbReference>
<dbReference type="InterPro" id="IPR033730">
    <property type="entry name" value="ProRS_core_prok"/>
</dbReference>
<dbReference type="InterPro" id="IPR036754">
    <property type="entry name" value="YbaK/aa-tRNA-synt-asso_dom_sf"/>
</dbReference>
<dbReference type="InterPro" id="IPR007214">
    <property type="entry name" value="YbaK/aa-tRNA-synth-assoc-dom"/>
</dbReference>
<dbReference type="NCBIfam" id="NF006625">
    <property type="entry name" value="PRK09194.1"/>
    <property type="match status" value="1"/>
</dbReference>
<dbReference type="NCBIfam" id="TIGR00409">
    <property type="entry name" value="proS_fam_II"/>
    <property type="match status" value="1"/>
</dbReference>
<dbReference type="PANTHER" id="PTHR42753">
    <property type="entry name" value="MITOCHONDRIAL RIBOSOME PROTEIN L39/PROLYL-TRNA LIGASE FAMILY MEMBER"/>
    <property type="match status" value="1"/>
</dbReference>
<dbReference type="PANTHER" id="PTHR42753:SF2">
    <property type="entry name" value="PROLINE--TRNA LIGASE"/>
    <property type="match status" value="1"/>
</dbReference>
<dbReference type="Pfam" id="PF03129">
    <property type="entry name" value="HGTP_anticodon"/>
    <property type="match status" value="1"/>
</dbReference>
<dbReference type="Pfam" id="PF00587">
    <property type="entry name" value="tRNA-synt_2b"/>
    <property type="match status" value="1"/>
</dbReference>
<dbReference type="Pfam" id="PF04073">
    <property type="entry name" value="tRNA_edit"/>
    <property type="match status" value="1"/>
</dbReference>
<dbReference type="PIRSF" id="PIRSF001535">
    <property type="entry name" value="ProRS_1"/>
    <property type="match status" value="1"/>
</dbReference>
<dbReference type="PRINTS" id="PR01046">
    <property type="entry name" value="TRNASYNTHPRO"/>
</dbReference>
<dbReference type="SUPFAM" id="SSF52954">
    <property type="entry name" value="Class II aaRS ABD-related"/>
    <property type="match status" value="1"/>
</dbReference>
<dbReference type="SUPFAM" id="SSF55681">
    <property type="entry name" value="Class II aaRS and biotin synthetases"/>
    <property type="match status" value="1"/>
</dbReference>
<dbReference type="SUPFAM" id="SSF55826">
    <property type="entry name" value="YbaK/ProRS associated domain"/>
    <property type="match status" value="1"/>
</dbReference>
<dbReference type="PROSITE" id="PS50862">
    <property type="entry name" value="AA_TRNA_LIGASE_II"/>
    <property type="match status" value="1"/>
</dbReference>